<evidence type="ECO:0000250" key="1">
    <source>
        <dbReference type="UniProtKB" id="P0C247"/>
    </source>
</evidence>
<evidence type="ECO:0000255" key="2"/>
<evidence type="ECO:0000269" key="3">
    <source>
    </source>
</evidence>
<evidence type="ECO:0000305" key="4"/>
<sequence>MQVSVLITLAVLGVMFVWTSAAELEERGSDQPAWLKSLERIFQSEERDCRALYGGCTKDEDCCKHLACRRTLPTYCAWDLTFP</sequence>
<dbReference type="EMBL" id="EU233889">
    <property type="protein sequence ID" value="ABY71708.1"/>
    <property type="molecule type" value="mRNA"/>
</dbReference>
<dbReference type="SMR" id="B1P1F8"/>
<dbReference type="ArachnoServer" id="AS000837">
    <property type="toxin name" value="U20-theraphotoxin-Cg1a"/>
</dbReference>
<dbReference type="GO" id="GO:0005576">
    <property type="term" value="C:extracellular region"/>
    <property type="evidence" value="ECO:0007669"/>
    <property type="project" value="UniProtKB-SubCell"/>
</dbReference>
<dbReference type="GO" id="GO:0008200">
    <property type="term" value="F:ion channel inhibitor activity"/>
    <property type="evidence" value="ECO:0007669"/>
    <property type="project" value="InterPro"/>
</dbReference>
<dbReference type="GO" id="GO:0090729">
    <property type="term" value="F:toxin activity"/>
    <property type="evidence" value="ECO:0007669"/>
    <property type="project" value="UniProtKB-KW"/>
</dbReference>
<dbReference type="InterPro" id="IPR011696">
    <property type="entry name" value="Huwentoxin-1"/>
</dbReference>
<dbReference type="Pfam" id="PF07740">
    <property type="entry name" value="Toxin_12"/>
    <property type="match status" value="1"/>
</dbReference>
<dbReference type="SUPFAM" id="SSF57059">
    <property type="entry name" value="omega toxin-like"/>
    <property type="match status" value="1"/>
</dbReference>
<protein>
    <recommendedName>
        <fullName>U20-theraphotoxin-Cg1a 2</fullName>
        <shortName>U20-TRTX-Cg1a</shortName>
    </recommendedName>
    <alternativeName>
        <fullName>Jingzhaotoxin-35.2</fullName>
        <shortName>JZTX-35.2</shortName>
    </alternativeName>
    <alternativeName>
        <fullName>Peptide F3-18.97</fullName>
    </alternativeName>
</protein>
<feature type="signal peptide" evidence="2">
    <location>
        <begin position="1"/>
        <end position="21"/>
    </location>
</feature>
<feature type="propeptide" id="PRO_0000398473" evidence="3">
    <location>
        <begin position="22"/>
        <end position="47"/>
    </location>
</feature>
<feature type="peptide" id="PRO_0000398474" description="U20-theraphotoxin-Cg1a 2">
    <location>
        <begin position="48"/>
        <end position="83"/>
    </location>
</feature>
<feature type="disulfide bond" evidence="1">
    <location>
        <begin position="49"/>
        <end position="63"/>
    </location>
</feature>
<feature type="disulfide bond" evidence="1">
    <location>
        <begin position="56"/>
        <end position="68"/>
    </location>
</feature>
<feature type="disulfide bond" evidence="1">
    <location>
        <begin position="62"/>
        <end position="76"/>
    </location>
</feature>
<keyword id="KW-0903">Direct protein sequencing</keyword>
<keyword id="KW-1015">Disulfide bond</keyword>
<keyword id="KW-0872">Ion channel impairing toxin</keyword>
<keyword id="KW-0960">Knottin</keyword>
<keyword id="KW-0964">Secreted</keyword>
<keyword id="KW-0732">Signal</keyword>
<keyword id="KW-0800">Toxin</keyword>
<proteinExistence type="evidence at protein level"/>
<organism>
    <name type="scientific">Chilobrachys guangxiensis</name>
    <name type="common">Chinese earth tiger tarantula</name>
    <name type="synonym">Chilobrachys jingzhao</name>
    <dbReference type="NCBI Taxonomy" id="278060"/>
    <lineage>
        <taxon>Eukaryota</taxon>
        <taxon>Metazoa</taxon>
        <taxon>Ecdysozoa</taxon>
        <taxon>Arthropoda</taxon>
        <taxon>Chelicerata</taxon>
        <taxon>Arachnida</taxon>
        <taxon>Araneae</taxon>
        <taxon>Mygalomorphae</taxon>
        <taxon>Theraphosidae</taxon>
        <taxon>Chilobrachys</taxon>
    </lineage>
</organism>
<name>JZ35B_CHIGU</name>
<comment type="function">
    <text>Probable ion channel inhibitor.</text>
</comment>
<comment type="subcellular location">
    <subcellularLocation>
        <location>Secreted</location>
    </subcellularLocation>
</comment>
<comment type="tissue specificity">
    <text>Expressed by the venom gland.</text>
</comment>
<comment type="domain">
    <text evidence="1">The presence of a 'disulfide through disulfide knot' structurally defines this protein as a knottin.</text>
</comment>
<comment type="mass spectrometry">
    <text>Monoisotopic mass.</text>
</comment>
<comment type="similarity">
    <text evidence="4">Belongs to the neurotoxin 10 (Hwtx-1) family. 40 (Jztx-35) subfamily.</text>
</comment>
<reference key="1">
    <citation type="journal article" date="2008" name="Cell. Mol. Life Sci.">
        <title>Molecular diversity and evolution of cystine knot toxins of the tarantula Chilobrachys jingzhao.</title>
        <authorList>
            <person name="Chen J."/>
            <person name="Deng M."/>
            <person name="He Q."/>
            <person name="Meng E."/>
            <person name="Jiang L."/>
            <person name="Liao Z."/>
            <person name="Rong M."/>
            <person name="Liang S."/>
        </authorList>
    </citation>
    <scope>NUCLEOTIDE SEQUENCE [LARGE SCALE MRNA]</scope>
    <source>
        <tissue>Venom gland</tissue>
    </source>
</reference>
<reference key="2">
    <citation type="journal article" date="2007" name="Proteomics">
        <title>Proteomic and peptidomic analysis of the venom from Chinese tarantula Chilobrachys jingzhao.</title>
        <authorList>
            <person name="Liao Z."/>
            <person name="Cao J."/>
            <person name="Li S."/>
            <person name="Yan X."/>
            <person name="Hu W."/>
            <person name="He Q."/>
            <person name="Chen J."/>
            <person name="Tang J."/>
            <person name="Xie J."/>
            <person name="Liang S."/>
        </authorList>
    </citation>
    <scope>PROTEIN SEQUENCE OF 48-83</scope>
    <scope>MASS SPECTROMETRY</scope>
    <source>
        <tissue>Venom</tissue>
    </source>
</reference>
<accession>B1P1F8</accession>